<accession>B0VLX4</accession>
<dbReference type="EC" id="4.2.1.17" evidence="1"/>
<dbReference type="EC" id="5.1.2.3" evidence="1"/>
<dbReference type="EC" id="5.3.3.8" evidence="1"/>
<dbReference type="EC" id="1.1.1.35" evidence="1"/>
<dbReference type="EMBL" id="CU468230">
    <property type="protein sequence ID" value="CAP02491.1"/>
    <property type="molecule type" value="Genomic_DNA"/>
</dbReference>
<dbReference type="SMR" id="B0VLX4"/>
<dbReference type="KEGG" id="abm:ABSDF3220"/>
<dbReference type="HOGENOM" id="CLU_009834_16_3_6"/>
<dbReference type="UniPathway" id="UPA00659"/>
<dbReference type="Proteomes" id="UP000001741">
    <property type="component" value="Chromosome"/>
</dbReference>
<dbReference type="GO" id="GO:0036125">
    <property type="term" value="C:fatty acid beta-oxidation multienzyme complex"/>
    <property type="evidence" value="ECO:0007669"/>
    <property type="project" value="InterPro"/>
</dbReference>
<dbReference type="GO" id="GO:0008692">
    <property type="term" value="F:3-hydroxybutyryl-CoA epimerase activity"/>
    <property type="evidence" value="ECO:0007669"/>
    <property type="project" value="UniProtKB-UniRule"/>
</dbReference>
<dbReference type="GO" id="GO:0004165">
    <property type="term" value="F:delta(3)-delta(2)-enoyl-CoA isomerase activity"/>
    <property type="evidence" value="ECO:0007669"/>
    <property type="project" value="UniProtKB-UniRule"/>
</dbReference>
<dbReference type="GO" id="GO:0004300">
    <property type="term" value="F:enoyl-CoA hydratase activity"/>
    <property type="evidence" value="ECO:0007669"/>
    <property type="project" value="UniProtKB-UniRule"/>
</dbReference>
<dbReference type="GO" id="GO:0016509">
    <property type="term" value="F:long-chain-3-hydroxyacyl-CoA dehydrogenase activity"/>
    <property type="evidence" value="ECO:0007669"/>
    <property type="project" value="TreeGrafter"/>
</dbReference>
<dbReference type="GO" id="GO:0070403">
    <property type="term" value="F:NAD+ binding"/>
    <property type="evidence" value="ECO:0007669"/>
    <property type="project" value="InterPro"/>
</dbReference>
<dbReference type="GO" id="GO:0006635">
    <property type="term" value="P:fatty acid beta-oxidation"/>
    <property type="evidence" value="ECO:0007669"/>
    <property type="project" value="UniProtKB-UniRule"/>
</dbReference>
<dbReference type="CDD" id="cd06558">
    <property type="entry name" value="crotonase-like"/>
    <property type="match status" value="1"/>
</dbReference>
<dbReference type="FunFam" id="3.40.50.720:FF:000009">
    <property type="entry name" value="Fatty oxidation complex, alpha subunit"/>
    <property type="match status" value="1"/>
</dbReference>
<dbReference type="Gene3D" id="1.10.1040.50">
    <property type="match status" value="1"/>
</dbReference>
<dbReference type="Gene3D" id="3.90.226.10">
    <property type="entry name" value="2-enoyl-CoA Hydratase, Chain A, domain 1"/>
    <property type="match status" value="1"/>
</dbReference>
<dbReference type="Gene3D" id="3.40.50.720">
    <property type="entry name" value="NAD(P)-binding Rossmann-like Domain"/>
    <property type="match status" value="1"/>
</dbReference>
<dbReference type="HAMAP" id="MF_01621">
    <property type="entry name" value="FadB"/>
    <property type="match status" value="1"/>
</dbReference>
<dbReference type="InterPro" id="IPR006180">
    <property type="entry name" value="3-OHacyl-CoA_DH_CS"/>
</dbReference>
<dbReference type="InterPro" id="IPR006176">
    <property type="entry name" value="3-OHacyl-CoA_DH_NAD-bd"/>
</dbReference>
<dbReference type="InterPro" id="IPR006108">
    <property type="entry name" value="3HC_DH_C"/>
</dbReference>
<dbReference type="InterPro" id="IPR008927">
    <property type="entry name" value="6-PGluconate_DH-like_C_sf"/>
</dbReference>
<dbReference type="InterPro" id="IPR029045">
    <property type="entry name" value="ClpP/crotonase-like_dom_sf"/>
</dbReference>
<dbReference type="InterPro" id="IPR018376">
    <property type="entry name" value="Enoyl-CoA_hyd/isom_CS"/>
</dbReference>
<dbReference type="InterPro" id="IPR001753">
    <property type="entry name" value="Enoyl-CoA_hydra/iso"/>
</dbReference>
<dbReference type="InterPro" id="IPR050136">
    <property type="entry name" value="FA_oxidation_alpha_subunit"/>
</dbReference>
<dbReference type="InterPro" id="IPR012799">
    <property type="entry name" value="FadB"/>
</dbReference>
<dbReference type="InterPro" id="IPR036291">
    <property type="entry name" value="NAD(P)-bd_dom_sf"/>
</dbReference>
<dbReference type="NCBIfam" id="TIGR02437">
    <property type="entry name" value="FadB"/>
    <property type="match status" value="1"/>
</dbReference>
<dbReference type="NCBIfam" id="NF008727">
    <property type="entry name" value="PRK11730.1"/>
    <property type="match status" value="1"/>
</dbReference>
<dbReference type="PANTHER" id="PTHR43612">
    <property type="entry name" value="TRIFUNCTIONAL ENZYME SUBUNIT ALPHA"/>
    <property type="match status" value="1"/>
</dbReference>
<dbReference type="PANTHER" id="PTHR43612:SF3">
    <property type="entry name" value="TRIFUNCTIONAL ENZYME SUBUNIT ALPHA, MITOCHONDRIAL"/>
    <property type="match status" value="1"/>
</dbReference>
<dbReference type="Pfam" id="PF00725">
    <property type="entry name" value="3HCDH"/>
    <property type="match status" value="1"/>
</dbReference>
<dbReference type="Pfam" id="PF02737">
    <property type="entry name" value="3HCDH_N"/>
    <property type="match status" value="1"/>
</dbReference>
<dbReference type="Pfam" id="PF00378">
    <property type="entry name" value="ECH_1"/>
    <property type="match status" value="1"/>
</dbReference>
<dbReference type="SUPFAM" id="SSF48179">
    <property type="entry name" value="6-phosphogluconate dehydrogenase C-terminal domain-like"/>
    <property type="match status" value="2"/>
</dbReference>
<dbReference type="SUPFAM" id="SSF52096">
    <property type="entry name" value="ClpP/crotonase"/>
    <property type="match status" value="1"/>
</dbReference>
<dbReference type="SUPFAM" id="SSF51735">
    <property type="entry name" value="NAD(P)-binding Rossmann-fold domains"/>
    <property type="match status" value="1"/>
</dbReference>
<dbReference type="PROSITE" id="PS00067">
    <property type="entry name" value="3HCDH"/>
    <property type="match status" value="1"/>
</dbReference>
<dbReference type="PROSITE" id="PS00166">
    <property type="entry name" value="ENOYL_COA_HYDRATASE"/>
    <property type="match status" value="1"/>
</dbReference>
<protein>
    <recommendedName>
        <fullName evidence="1">Fatty acid oxidation complex subunit alpha</fullName>
    </recommendedName>
    <domain>
        <recommendedName>
            <fullName evidence="1">Enoyl-CoA hydratase/Delta(3)-cis-Delta(2)-trans-enoyl-CoA isomerase/3-hydroxybutyryl-CoA epimerase</fullName>
            <ecNumber evidence="1">4.2.1.17</ecNumber>
            <ecNumber evidence="1">5.1.2.3</ecNumber>
            <ecNumber evidence="1">5.3.3.8</ecNumber>
        </recommendedName>
    </domain>
    <domain>
        <recommendedName>
            <fullName evidence="1">3-hydroxyacyl-CoA dehydrogenase</fullName>
            <ecNumber evidence="1">1.1.1.35</ecNumber>
        </recommendedName>
    </domain>
</protein>
<organism>
    <name type="scientific">Acinetobacter baumannii (strain SDF)</name>
    <dbReference type="NCBI Taxonomy" id="509170"/>
    <lineage>
        <taxon>Bacteria</taxon>
        <taxon>Pseudomonadati</taxon>
        <taxon>Pseudomonadota</taxon>
        <taxon>Gammaproteobacteria</taxon>
        <taxon>Moraxellales</taxon>
        <taxon>Moraxellaceae</taxon>
        <taxon>Acinetobacter</taxon>
        <taxon>Acinetobacter calcoaceticus/baumannii complex</taxon>
    </lineage>
</organism>
<gene>
    <name evidence="1" type="primary">fadB</name>
    <name type="ordered locus">ABSDF3220</name>
</gene>
<reference key="1">
    <citation type="journal article" date="2008" name="PLoS ONE">
        <title>Comparative analysis of Acinetobacters: three genomes for three lifestyles.</title>
        <authorList>
            <person name="Vallenet D."/>
            <person name="Nordmann P."/>
            <person name="Barbe V."/>
            <person name="Poirel L."/>
            <person name="Mangenot S."/>
            <person name="Bataille E."/>
            <person name="Dossat C."/>
            <person name="Gas S."/>
            <person name="Kreimeyer A."/>
            <person name="Lenoble P."/>
            <person name="Oztas S."/>
            <person name="Poulain J."/>
            <person name="Segurens B."/>
            <person name="Robert C."/>
            <person name="Abergel C."/>
            <person name="Claverie J.-M."/>
            <person name="Raoult D."/>
            <person name="Medigue C."/>
            <person name="Weissenbach J."/>
            <person name="Cruveiller S."/>
        </authorList>
    </citation>
    <scope>NUCLEOTIDE SEQUENCE [LARGE SCALE GENOMIC DNA]</scope>
    <source>
        <strain>SDF</strain>
    </source>
</reference>
<sequence length="717" mass="77800">MIHAGNAITVQMLADGIAEFRFDLQGESVNKFNRATIEDFKAAIAAVKANNDIKGLVVTSGKSTFIVGADITEFGQNFAQGEKAIVDWLMPVHEIFNSFEDLDLPKVAAINGIALGGGFEMCLVCDYRVMSEAAQVGLPEIKLGIYPGFGGSVRLSRLIGIDNAVEWMAMATPKKPAAALKDGAVDAVVAADKLLDAATDLVKQAISGRLNWKAKRQEKLEAVKLNPLEQMMAFNTAKGAVLAKANPAQYPAPKLLLDSLQAGASLARDEALKAEAEGFAKAAVTPQAEALIGLFINDQVVKKASKQHEKGAHPVNQAAVLGAGIMGGGIAYQAASKGTPIIMKDIGNPQLALGMKEANNLLTKQVERKKMKPAQMGETLARIRPTLSYEEFKEVDIVIEAVTENPKVKEIVLAETEKNVRENTIIASNTSTISITRLAKALQRPENFVGMHFFNPVHMMPLVEVIRGEKTSEEAIATTVVLAQKMGKTPIVVNDCPGFLVNRVLFPYFGAFDLLVKDGADFQQIDNVMSKFGWPMGPAYLIDVVGIDTGVHGAEVMAEGFPDRMKPDYKGAIEAMYEAKRLGQKNDVGFYKYELDKKGKKAKTVDPTAYEVIAPFVTGEKREFDNQEIIDRMMLALCNETARCLEDNIVATASEADMAMIMGIGFPPFRGGPCRYIDQTGVAEYVALCDKYAHLGKAYEAPQMLRDMAANNKKFYG</sequence>
<feature type="chain" id="PRO_1000186029" description="Fatty acid oxidation complex subunit alpha">
    <location>
        <begin position="1"/>
        <end position="717"/>
    </location>
</feature>
<feature type="region of interest" description="Enoyl-CoA hydratase/isomerase" evidence="1">
    <location>
        <begin position="1"/>
        <end position="190"/>
    </location>
</feature>
<feature type="region of interest" description="3-hydroxyacyl-CoA dehydrogenase" evidence="1">
    <location>
        <begin position="313"/>
        <end position="717"/>
    </location>
</feature>
<feature type="active site" description="For 3-hydroxyacyl-CoA dehydrogenase activity" evidence="1">
    <location>
        <position position="452"/>
    </location>
</feature>
<feature type="binding site" evidence="1">
    <location>
        <position position="298"/>
    </location>
    <ligand>
        <name>substrate</name>
    </ligand>
</feature>
<feature type="binding site" evidence="1">
    <location>
        <position position="326"/>
    </location>
    <ligand>
        <name>NAD(+)</name>
        <dbReference type="ChEBI" id="CHEBI:57540"/>
    </ligand>
</feature>
<feature type="binding site" evidence="1">
    <location>
        <position position="345"/>
    </location>
    <ligand>
        <name>NAD(+)</name>
        <dbReference type="ChEBI" id="CHEBI:57540"/>
    </ligand>
</feature>
<feature type="binding site" evidence="1">
    <location>
        <begin position="402"/>
        <end position="404"/>
    </location>
    <ligand>
        <name>NAD(+)</name>
        <dbReference type="ChEBI" id="CHEBI:57540"/>
    </ligand>
</feature>
<feature type="binding site" evidence="1">
    <location>
        <position position="409"/>
    </location>
    <ligand>
        <name>NAD(+)</name>
        <dbReference type="ChEBI" id="CHEBI:57540"/>
    </ligand>
</feature>
<feature type="binding site" evidence="1">
    <location>
        <position position="431"/>
    </location>
    <ligand>
        <name>NAD(+)</name>
        <dbReference type="ChEBI" id="CHEBI:57540"/>
    </ligand>
</feature>
<feature type="binding site" evidence="1">
    <location>
        <position position="455"/>
    </location>
    <ligand>
        <name>NAD(+)</name>
        <dbReference type="ChEBI" id="CHEBI:57540"/>
    </ligand>
</feature>
<feature type="binding site" evidence="1">
    <location>
        <position position="502"/>
    </location>
    <ligand>
        <name>substrate</name>
    </ligand>
</feature>
<feature type="site" description="Important for catalytic activity" evidence="1">
    <location>
        <position position="120"/>
    </location>
</feature>
<feature type="site" description="Important for catalytic activity" evidence="1">
    <location>
        <position position="140"/>
    </location>
</feature>
<keyword id="KW-0276">Fatty acid metabolism</keyword>
<keyword id="KW-0413">Isomerase</keyword>
<keyword id="KW-0442">Lipid degradation</keyword>
<keyword id="KW-0443">Lipid metabolism</keyword>
<keyword id="KW-0456">Lyase</keyword>
<keyword id="KW-0511">Multifunctional enzyme</keyword>
<keyword id="KW-0520">NAD</keyword>
<keyword id="KW-0560">Oxidoreductase</keyword>
<name>FADB_ACIBS</name>
<evidence type="ECO:0000255" key="1">
    <source>
        <dbReference type="HAMAP-Rule" id="MF_01621"/>
    </source>
</evidence>
<proteinExistence type="inferred from homology"/>
<comment type="function">
    <text evidence="1">Involved in the aerobic and anaerobic degradation of long-chain fatty acids via beta-oxidation cycle. Catalyzes the formation of 3-oxoacyl-CoA from enoyl-CoA via L-3-hydroxyacyl-CoA. It can also use D-3-hydroxyacyl-CoA and cis-3-enoyl-CoA as substrate.</text>
</comment>
<comment type="catalytic activity">
    <reaction evidence="1">
        <text>a (3S)-3-hydroxyacyl-CoA + NAD(+) = a 3-oxoacyl-CoA + NADH + H(+)</text>
        <dbReference type="Rhea" id="RHEA:22432"/>
        <dbReference type="ChEBI" id="CHEBI:15378"/>
        <dbReference type="ChEBI" id="CHEBI:57318"/>
        <dbReference type="ChEBI" id="CHEBI:57540"/>
        <dbReference type="ChEBI" id="CHEBI:57945"/>
        <dbReference type="ChEBI" id="CHEBI:90726"/>
        <dbReference type="EC" id="1.1.1.35"/>
    </reaction>
</comment>
<comment type="catalytic activity">
    <reaction evidence="1">
        <text>a (3S)-3-hydroxyacyl-CoA = a (2E)-enoyl-CoA + H2O</text>
        <dbReference type="Rhea" id="RHEA:16105"/>
        <dbReference type="ChEBI" id="CHEBI:15377"/>
        <dbReference type="ChEBI" id="CHEBI:57318"/>
        <dbReference type="ChEBI" id="CHEBI:58856"/>
        <dbReference type="EC" id="4.2.1.17"/>
    </reaction>
</comment>
<comment type="catalytic activity">
    <reaction evidence="1">
        <text>a 4-saturated-(3S)-3-hydroxyacyl-CoA = a (3E)-enoyl-CoA + H2O</text>
        <dbReference type="Rhea" id="RHEA:20724"/>
        <dbReference type="ChEBI" id="CHEBI:15377"/>
        <dbReference type="ChEBI" id="CHEBI:58521"/>
        <dbReference type="ChEBI" id="CHEBI:137480"/>
        <dbReference type="EC" id="4.2.1.17"/>
    </reaction>
</comment>
<comment type="catalytic activity">
    <reaction evidence="1">
        <text>(3S)-3-hydroxybutanoyl-CoA = (3R)-3-hydroxybutanoyl-CoA</text>
        <dbReference type="Rhea" id="RHEA:21760"/>
        <dbReference type="ChEBI" id="CHEBI:57315"/>
        <dbReference type="ChEBI" id="CHEBI:57316"/>
        <dbReference type="EC" id="5.1.2.3"/>
    </reaction>
</comment>
<comment type="catalytic activity">
    <reaction evidence="1">
        <text>a (3Z)-enoyl-CoA = a 4-saturated (2E)-enoyl-CoA</text>
        <dbReference type="Rhea" id="RHEA:45900"/>
        <dbReference type="ChEBI" id="CHEBI:85097"/>
        <dbReference type="ChEBI" id="CHEBI:85489"/>
        <dbReference type="EC" id="5.3.3.8"/>
    </reaction>
</comment>
<comment type="catalytic activity">
    <reaction evidence="1">
        <text>a (3E)-enoyl-CoA = a 4-saturated (2E)-enoyl-CoA</text>
        <dbReference type="Rhea" id="RHEA:45228"/>
        <dbReference type="ChEBI" id="CHEBI:58521"/>
        <dbReference type="ChEBI" id="CHEBI:85097"/>
        <dbReference type="EC" id="5.3.3.8"/>
    </reaction>
</comment>
<comment type="pathway">
    <text evidence="1">Lipid metabolism; fatty acid beta-oxidation.</text>
</comment>
<comment type="subunit">
    <text evidence="1">Heterotetramer of two alpha chains (FadB) and two beta chains (FadA).</text>
</comment>
<comment type="similarity">
    <text evidence="1">In the N-terminal section; belongs to the enoyl-CoA hydratase/isomerase family.</text>
</comment>
<comment type="similarity">
    <text evidence="1">In the C-terminal section; belongs to the 3-hydroxyacyl-CoA dehydrogenase family.</text>
</comment>